<comment type="function">
    <text evidence="1">One of the components of the core complex of photosystem II (PSII), required for its stability and/or assembly. PSII is a light-driven water:plastoquinone oxidoreductase that uses light energy to abstract electrons from H(2)O, generating O(2) and a proton gradient subsequently used for ATP formation. It consists of a core antenna complex that captures photons, and an electron transfer chain that converts photonic excitation into a charge separation.</text>
</comment>
<comment type="subunit">
    <text evidence="1 2 3 4">PSII is composed of 1 copy each of membrane proteins PsbA, PsbB, PsbC, PsbD, PsbE, PsbF, PsbH, PsbI, PsbJ, PsbK, PsbL, PsbM, PsbT, PsbX, PsbY, PsbZ, Psb30/Ycf12, at least 3 peripheral proteins of the oxygen-evolving complex and a large number of cofactors. It forms dimeric complexes.</text>
</comment>
<comment type="subcellular location">
    <subcellularLocation>
        <location evidence="1 2 3 4">Plastid</location>
        <location evidence="1 2 3 4">Chloroplast thylakoid membrane</location>
        <topology evidence="1">Single-pass membrane protein</topology>
    </subcellularLocation>
</comment>
<comment type="PTM">
    <text evidence="1 4">Phosphorylation is a light-dependent reaction catalyzed by a membrane-bound kinase (Ref.3). Phosphorylation occurs on Thr residue(s) in the N-terminus of the protein.</text>
</comment>
<comment type="similarity">
    <text evidence="1">Belongs to the PsbH family.</text>
</comment>
<comment type="sequence caution" evidence="6">
    <conflict type="erroneous initiation">
        <sequence resource="EMBL-CDS" id="CAB88756"/>
    </conflict>
    <text>Extended N-terminus.</text>
</comment>
<geneLocation type="chloroplast"/>
<sequence length="73" mass="7730">MATQTVESSSRSRPKPTTVGALLKPLNSEYGKVAPGWGTTPLMGVAMALFAVFLSIILEIYNSSVLLDGISMN</sequence>
<accession>P05146</accession>
<accession>Q9M3K3</accession>
<proteinExistence type="evidence at protein level"/>
<reference key="1">
    <citation type="journal article" date="1986" name="Curr. Genet.">
        <title>The gene for the Mr 10,000 phosphoprotein associated with photosystem II is part of the psbB operon of the spinach plastid chromosome.</title>
        <authorList>
            <person name="Westhoff P."/>
            <person name="Farchaus J.W."/>
            <person name="Herrmann R.G."/>
        </authorList>
    </citation>
    <scope>NUCLEOTIDE SEQUENCE [GENOMIC DNA]</scope>
</reference>
<reference key="2">
    <citation type="journal article" date="2001" name="Plant Mol. Biol.">
        <title>The plastid chromosome of spinach (Spinacia oleracea): complete nucleotide sequence and gene organization.</title>
        <authorList>
            <person name="Schmitz-Linneweber C."/>
            <person name="Maier R.M."/>
            <person name="Alcaraz J.-P."/>
            <person name="Cottet A."/>
            <person name="Herrmann R.G."/>
            <person name="Mache R."/>
        </authorList>
    </citation>
    <scope>NUCLEOTIDE SEQUENCE [LARGE SCALE GENOMIC DNA]</scope>
    <source>
        <strain>cv. Geant d'hiver</strain>
        <strain>cv. Monatol</strain>
    </source>
</reference>
<reference key="3">
    <citation type="journal article" date="1987" name="FEBS Lett.">
        <title>Identification of the phosphorylation site of an 8.3 kDa protein from photosystem II of spinach.</title>
        <authorList>
            <person name="Michel H.P."/>
            <person name="Bennett J."/>
        </authorList>
    </citation>
    <scope>PROTEIN SEQUENCE OF 2-11</scope>
    <scope>SUBUNIT</scope>
    <scope>SUBCELLULAR LOCATION</scope>
    <scope>PHOSPHORYLATION AT THR-3</scope>
    <scope>TOPOLOGY</scope>
</reference>
<reference key="4">
    <citation type="journal article" date="1989" name="FEBS Lett.">
        <title>N-terminal sequencing of photosystem II low-molecular-mass proteins. 5 and 4.1 kDa components of the O2-evolving core complex from higher plants.</title>
        <authorList>
            <person name="Ikeuchi M."/>
            <person name="Takio K."/>
            <person name="Inoue Y."/>
        </authorList>
    </citation>
    <scope>PROTEIN SEQUENCE OF 2-11</scope>
    <scope>SUBUNIT</scope>
    <scope>SUBCELLULAR LOCATION</scope>
</reference>
<reference key="5">
    <citation type="journal article" date="1986" name="Arch. Biochem. Biophys.">
        <title>Purification and partial sequence of the Mr 10,000 phosphoprotein from spinach thylakoids.</title>
        <authorList>
            <person name="Farchaus J."/>
            <person name="Dilley R.A."/>
        </authorList>
    </citation>
    <scope>PROTEIN SEQUENCE OF 2-10</scope>
    <scope>SUBUNIT</scope>
    <scope>SUBCELLULAR LOCATION</scope>
</reference>
<evidence type="ECO:0000255" key="1">
    <source>
        <dbReference type="HAMAP-Rule" id="MF_00752"/>
    </source>
</evidence>
<evidence type="ECO:0000269" key="2">
    <source>
    </source>
</evidence>
<evidence type="ECO:0000269" key="3">
    <source>
    </source>
</evidence>
<evidence type="ECO:0000269" key="4">
    <source ref="3"/>
</evidence>
<evidence type="ECO:0000303" key="5">
    <source>
    </source>
</evidence>
<evidence type="ECO:0000305" key="6"/>
<evidence type="ECO:0007829" key="7">
    <source>
        <dbReference type="PDB" id="3JCU"/>
    </source>
</evidence>
<protein>
    <recommendedName>
        <fullName evidence="1">Photosystem II reaction center protein H</fullName>
        <shortName evidence="1">PSII-H</shortName>
    </recommendedName>
    <alternativeName>
        <fullName evidence="1 5">Photosystem II 10 kDa phosphoprotein</fullName>
    </alternativeName>
</protein>
<dbReference type="EMBL" id="X07106">
    <property type="protein sequence ID" value="CAA30127.1"/>
    <property type="molecule type" value="Genomic_DNA"/>
</dbReference>
<dbReference type="EMBL" id="AJ400848">
    <property type="protein sequence ID" value="CAB88756.1"/>
    <property type="status" value="ALT_INIT"/>
    <property type="molecule type" value="Genomic_DNA"/>
</dbReference>
<dbReference type="PIR" id="S00410">
    <property type="entry name" value="S00410"/>
</dbReference>
<dbReference type="RefSeq" id="NP_054963.1">
    <property type="nucleotide sequence ID" value="NC_002202.1"/>
</dbReference>
<dbReference type="PDB" id="3JCU">
    <property type="method" value="EM"/>
    <property type="resolution" value="3.20 A"/>
    <property type="chains" value="H/h=1-73"/>
</dbReference>
<dbReference type="PDB" id="8Z9D">
    <property type="method" value="EM"/>
    <property type="resolution" value="3.22 A"/>
    <property type="chains" value="H/HH/Hh/h=1-73"/>
</dbReference>
<dbReference type="PDBsum" id="3JCU"/>
<dbReference type="PDBsum" id="8Z9D"/>
<dbReference type="EMDB" id="EMD-39860"/>
<dbReference type="SMR" id="P05146"/>
<dbReference type="DIP" id="DIP-62014N"/>
<dbReference type="FunCoup" id="P05146">
    <property type="interactions" value="337"/>
</dbReference>
<dbReference type="IntAct" id="P05146">
    <property type="interactions" value="1"/>
</dbReference>
<dbReference type="STRING" id="3562.P05146"/>
<dbReference type="GeneID" id="2715613"/>
<dbReference type="KEGG" id="soe:2715613"/>
<dbReference type="InParanoid" id="P05146"/>
<dbReference type="OrthoDB" id="1855002at2759"/>
<dbReference type="Proteomes" id="UP001155700">
    <property type="component" value="Chloroplast Pltd"/>
</dbReference>
<dbReference type="GO" id="GO:0009535">
    <property type="term" value="C:chloroplast thylakoid membrane"/>
    <property type="evidence" value="ECO:0007669"/>
    <property type="project" value="UniProtKB-SubCell"/>
</dbReference>
<dbReference type="GO" id="GO:0009523">
    <property type="term" value="C:photosystem II"/>
    <property type="evidence" value="ECO:0007669"/>
    <property type="project" value="UniProtKB-KW"/>
</dbReference>
<dbReference type="GO" id="GO:0042301">
    <property type="term" value="F:phosphate ion binding"/>
    <property type="evidence" value="ECO:0007669"/>
    <property type="project" value="InterPro"/>
</dbReference>
<dbReference type="GO" id="GO:0015979">
    <property type="term" value="P:photosynthesis"/>
    <property type="evidence" value="ECO:0007669"/>
    <property type="project" value="UniProtKB-UniRule"/>
</dbReference>
<dbReference type="GO" id="GO:0050821">
    <property type="term" value="P:protein stabilization"/>
    <property type="evidence" value="ECO:0007669"/>
    <property type="project" value="InterPro"/>
</dbReference>
<dbReference type="FunFam" id="1.20.5.880:FF:000001">
    <property type="entry name" value="Photosystem II reaction center protein H"/>
    <property type="match status" value="1"/>
</dbReference>
<dbReference type="Gene3D" id="1.20.5.880">
    <property type="entry name" value="Photosystem II reaction center protein H"/>
    <property type="match status" value="1"/>
</dbReference>
<dbReference type="HAMAP" id="MF_00752">
    <property type="entry name" value="PSII_PsbH"/>
    <property type="match status" value="1"/>
</dbReference>
<dbReference type="InterPro" id="IPR001056">
    <property type="entry name" value="PSII_PsbH"/>
</dbReference>
<dbReference type="InterPro" id="IPR036863">
    <property type="entry name" value="PSII_PsbH_sf"/>
</dbReference>
<dbReference type="NCBIfam" id="NF002728">
    <property type="entry name" value="PRK02624.1"/>
    <property type="match status" value="1"/>
</dbReference>
<dbReference type="PANTHER" id="PTHR34469">
    <property type="entry name" value="PHOTOSYSTEM II REACTION CENTER PROTEIN H"/>
    <property type="match status" value="1"/>
</dbReference>
<dbReference type="PANTHER" id="PTHR34469:SF4">
    <property type="entry name" value="PHOTOSYSTEM II REACTION CENTER PROTEIN H"/>
    <property type="match status" value="1"/>
</dbReference>
<dbReference type="Pfam" id="PF00737">
    <property type="entry name" value="PsbH"/>
    <property type="match status" value="1"/>
</dbReference>
<dbReference type="SUPFAM" id="SSF161025">
    <property type="entry name" value="Photosystem II 10 kDa phosphoprotein PsbH"/>
    <property type="match status" value="1"/>
</dbReference>
<keyword id="KW-0002">3D-structure</keyword>
<keyword id="KW-0150">Chloroplast</keyword>
<keyword id="KW-0903">Direct protein sequencing</keyword>
<keyword id="KW-0472">Membrane</keyword>
<keyword id="KW-0597">Phosphoprotein</keyword>
<keyword id="KW-0602">Photosynthesis</keyword>
<keyword id="KW-0604">Photosystem II</keyword>
<keyword id="KW-0934">Plastid</keyword>
<keyword id="KW-1185">Reference proteome</keyword>
<keyword id="KW-0793">Thylakoid</keyword>
<keyword id="KW-0812">Transmembrane</keyword>
<keyword id="KW-1133">Transmembrane helix</keyword>
<organism>
    <name type="scientific">Spinacia oleracea</name>
    <name type="common">Spinach</name>
    <dbReference type="NCBI Taxonomy" id="3562"/>
    <lineage>
        <taxon>Eukaryota</taxon>
        <taxon>Viridiplantae</taxon>
        <taxon>Streptophyta</taxon>
        <taxon>Embryophyta</taxon>
        <taxon>Tracheophyta</taxon>
        <taxon>Spermatophyta</taxon>
        <taxon>Magnoliopsida</taxon>
        <taxon>eudicotyledons</taxon>
        <taxon>Gunneridae</taxon>
        <taxon>Pentapetalae</taxon>
        <taxon>Caryophyllales</taxon>
        <taxon>Chenopodiaceae</taxon>
        <taxon>Chenopodioideae</taxon>
        <taxon>Anserineae</taxon>
        <taxon>Spinacia</taxon>
    </lineage>
</organism>
<feature type="initiator methionine" description="Removed" evidence="2 3 4">
    <location>
        <position position="1"/>
    </location>
</feature>
<feature type="chain" id="PRO_0000070537" description="Photosystem II reaction center protein H">
    <location>
        <begin position="2"/>
        <end position="73"/>
    </location>
</feature>
<feature type="topological domain" description="Stromal" evidence="4">
    <location>
        <begin position="2"/>
        <end position="40"/>
    </location>
</feature>
<feature type="transmembrane region" description="Helical" evidence="1">
    <location>
        <begin position="41"/>
        <end position="61"/>
    </location>
</feature>
<feature type="topological domain" description="Lumenal, thylakoid" evidence="4">
    <location>
        <begin position="62"/>
        <end position="73"/>
    </location>
</feature>
<feature type="modified residue" description="Phosphothreonine" evidence="1 4">
    <location>
        <position position="3"/>
    </location>
</feature>
<feature type="modified residue" description="Phosphothreonine" evidence="1">
    <location>
        <position position="5"/>
    </location>
</feature>
<feature type="sequence conflict" description="In Ref. 1; CAA30127." evidence="6" ref="1">
    <original>E</original>
    <variation>K</variation>
    <location>
        <position position="29"/>
    </location>
</feature>
<feature type="sequence conflict" description="In Ref. 1; CAA30127." evidence="6" ref="1">
    <original>G</original>
    <variation>R</variation>
    <location>
        <position position="36"/>
    </location>
</feature>
<feature type="helix" evidence="7">
    <location>
        <begin position="18"/>
        <end position="28"/>
    </location>
</feature>
<feature type="turn" evidence="7">
    <location>
        <begin position="36"/>
        <end position="39"/>
    </location>
</feature>
<feature type="helix" evidence="7">
    <location>
        <begin position="40"/>
        <end position="61"/>
    </location>
</feature>
<gene>
    <name evidence="1" type="primary">psbH</name>
</gene>
<name>PSBH_SPIOL</name>